<dbReference type="EMBL" id="AF134127">
    <property type="protein sequence ID" value="AAD28774.1"/>
    <property type="molecule type" value="mRNA"/>
</dbReference>
<dbReference type="EMBL" id="AC010871">
    <property type="protein sequence ID" value="AAF07831.1"/>
    <property type="molecule type" value="Genomic_DNA"/>
</dbReference>
<dbReference type="EMBL" id="CP002686">
    <property type="protein sequence ID" value="AEE74697.1"/>
    <property type="molecule type" value="Genomic_DNA"/>
</dbReference>
<dbReference type="EMBL" id="CP002686">
    <property type="protein sequence ID" value="AEE74698.1"/>
    <property type="molecule type" value="Genomic_DNA"/>
</dbReference>
<dbReference type="EMBL" id="AY065140">
    <property type="protein sequence ID" value="AAL38316.1"/>
    <property type="molecule type" value="mRNA"/>
</dbReference>
<dbReference type="EMBL" id="AY081608">
    <property type="protein sequence ID" value="AAM10170.1"/>
    <property type="molecule type" value="mRNA"/>
</dbReference>
<dbReference type="PIR" id="T52317">
    <property type="entry name" value="T52317"/>
</dbReference>
<dbReference type="RefSeq" id="NP_187506.1">
    <molecule id="Q9XF88-1"/>
    <property type="nucleotide sequence ID" value="NM_111728.5"/>
</dbReference>
<dbReference type="RefSeq" id="NP_850545.1">
    <molecule id="Q9XF88-2"/>
    <property type="nucleotide sequence ID" value="NM_180214.1"/>
</dbReference>
<dbReference type="SMR" id="Q9XF88"/>
<dbReference type="BioGRID" id="5377">
    <property type="interactions" value="20"/>
</dbReference>
<dbReference type="FunCoup" id="Q9XF88">
    <property type="interactions" value="784"/>
</dbReference>
<dbReference type="IntAct" id="Q9XF88">
    <property type="interactions" value="1"/>
</dbReference>
<dbReference type="MINT" id="Q9XF88"/>
<dbReference type="STRING" id="3702.Q9XF88"/>
<dbReference type="iPTMnet" id="Q9XF88"/>
<dbReference type="PaxDb" id="3702-AT3G08940.2"/>
<dbReference type="ProteomicsDB" id="239196">
    <molecule id="Q9XF88-1"/>
</dbReference>
<dbReference type="EnsemblPlants" id="AT3G08940.1">
    <molecule id="Q9XF88-2"/>
    <property type="protein sequence ID" value="AT3G08940.1"/>
    <property type="gene ID" value="AT3G08940"/>
</dbReference>
<dbReference type="EnsemblPlants" id="AT3G08940.2">
    <molecule id="Q9XF88-1"/>
    <property type="protein sequence ID" value="AT3G08940.2"/>
    <property type="gene ID" value="AT3G08940"/>
</dbReference>
<dbReference type="GeneID" id="820043"/>
<dbReference type="Gramene" id="AT3G08940.1">
    <molecule id="Q9XF88-2"/>
    <property type="protein sequence ID" value="AT3G08940.1"/>
    <property type="gene ID" value="AT3G08940"/>
</dbReference>
<dbReference type="Gramene" id="AT3G08940.2">
    <molecule id="Q9XF88-1"/>
    <property type="protein sequence ID" value="AT3G08940.2"/>
    <property type="gene ID" value="AT3G08940"/>
</dbReference>
<dbReference type="KEGG" id="ath:AT3G08940"/>
<dbReference type="Araport" id="AT3G08940"/>
<dbReference type="TAIR" id="AT3G08940">
    <property type="gene designation" value="LHCB4.2"/>
</dbReference>
<dbReference type="eggNOG" id="ENOG502QRH9">
    <property type="taxonomic scope" value="Eukaryota"/>
</dbReference>
<dbReference type="HOGENOM" id="CLU_057943_0_0_1"/>
<dbReference type="InParanoid" id="Q9XF88"/>
<dbReference type="OMA" id="ERPLWYP"/>
<dbReference type="PhylomeDB" id="Q9XF88"/>
<dbReference type="PRO" id="PR:Q9XF88"/>
<dbReference type="Proteomes" id="UP000006548">
    <property type="component" value="Chromosome 3"/>
</dbReference>
<dbReference type="ExpressionAtlas" id="Q9XF88">
    <property type="expression patterns" value="baseline and differential"/>
</dbReference>
<dbReference type="GO" id="GO:0009507">
    <property type="term" value="C:chloroplast"/>
    <property type="evidence" value="ECO:0007005"/>
    <property type="project" value="TAIR"/>
</dbReference>
<dbReference type="GO" id="GO:0009941">
    <property type="term" value="C:chloroplast envelope"/>
    <property type="evidence" value="ECO:0007005"/>
    <property type="project" value="TAIR"/>
</dbReference>
<dbReference type="GO" id="GO:0009534">
    <property type="term" value="C:chloroplast thylakoid"/>
    <property type="evidence" value="ECO:0007005"/>
    <property type="project" value="TAIR"/>
</dbReference>
<dbReference type="GO" id="GO:0009535">
    <property type="term" value="C:chloroplast thylakoid membrane"/>
    <property type="evidence" value="ECO:0007005"/>
    <property type="project" value="TAIR"/>
</dbReference>
<dbReference type="GO" id="GO:0005829">
    <property type="term" value="C:cytosol"/>
    <property type="evidence" value="ECO:0007005"/>
    <property type="project" value="TAIR"/>
</dbReference>
<dbReference type="GO" id="GO:0009522">
    <property type="term" value="C:photosystem I"/>
    <property type="evidence" value="ECO:0007669"/>
    <property type="project" value="UniProtKB-KW"/>
</dbReference>
<dbReference type="GO" id="GO:0009523">
    <property type="term" value="C:photosystem II"/>
    <property type="evidence" value="ECO:0007669"/>
    <property type="project" value="UniProtKB-KW"/>
</dbReference>
<dbReference type="GO" id="GO:0009579">
    <property type="term" value="C:thylakoid"/>
    <property type="evidence" value="ECO:0007005"/>
    <property type="project" value="TAIR"/>
</dbReference>
<dbReference type="GO" id="GO:0016168">
    <property type="term" value="F:chlorophyll binding"/>
    <property type="evidence" value="ECO:0007669"/>
    <property type="project" value="UniProtKB-KW"/>
</dbReference>
<dbReference type="GO" id="GO:0046872">
    <property type="term" value="F:metal ion binding"/>
    <property type="evidence" value="ECO:0007669"/>
    <property type="project" value="UniProtKB-KW"/>
</dbReference>
<dbReference type="GO" id="GO:0003729">
    <property type="term" value="F:mRNA binding"/>
    <property type="evidence" value="ECO:0000314"/>
    <property type="project" value="TAIR"/>
</dbReference>
<dbReference type="GO" id="GO:0009765">
    <property type="term" value="P:photosynthesis, light harvesting"/>
    <property type="evidence" value="ECO:0007669"/>
    <property type="project" value="InterPro"/>
</dbReference>
<dbReference type="FunFam" id="1.10.3460.10:FF:000003">
    <property type="entry name" value="Chlorophyll a-b binding protein, chloroplastic"/>
    <property type="match status" value="1"/>
</dbReference>
<dbReference type="Gene3D" id="1.10.3460.10">
    <property type="entry name" value="Chlorophyll a/b binding protein domain"/>
    <property type="match status" value="1"/>
</dbReference>
<dbReference type="InterPro" id="IPR001344">
    <property type="entry name" value="Chloro_AB-bd_pln"/>
</dbReference>
<dbReference type="InterPro" id="IPR022796">
    <property type="entry name" value="Chloroa_b-bind"/>
</dbReference>
<dbReference type="PANTHER" id="PTHR21649">
    <property type="entry name" value="CHLOROPHYLL A/B BINDING PROTEIN"/>
    <property type="match status" value="1"/>
</dbReference>
<dbReference type="Pfam" id="PF00504">
    <property type="entry name" value="Chloroa_b-bind"/>
    <property type="match status" value="1"/>
</dbReference>
<dbReference type="SUPFAM" id="SSF103511">
    <property type="entry name" value="Chlorophyll a-b binding protein"/>
    <property type="match status" value="1"/>
</dbReference>
<reference key="1">
    <citation type="journal article" date="1999" name="Trends Plant Sci.">
        <title>A guide to the Lhc genes and their relatives in Arabidopsis.</title>
        <authorList>
            <person name="Jansson S."/>
        </authorList>
    </citation>
    <scope>NUCLEOTIDE SEQUENCE [MRNA] (ISOFORM 1)</scope>
</reference>
<reference key="2">
    <citation type="journal article" date="2000" name="Nature">
        <title>Sequence and analysis of chromosome 3 of the plant Arabidopsis thaliana.</title>
        <authorList>
            <person name="Salanoubat M."/>
            <person name="Lemcke K."/>
            <person name="Rieger M."/>
            <person name="Ansorge W."/>
            <person name="Unseld M."/>
            <person name="Fartmann B."/>
            <person name="Valle G."/>
            <person name="Bloecker H."/>
            <person name="Perez-Alonso M."/>
            <person name="Obermaier B."/>
            <person name="Delseny M."/>
            <person name="Boutry M."/>
            <person name="Grivell L.A."/>
            <person name="Mache R."/>
            <person name="Puigdomenech P."/>
            <person name="De Simone V."/>
            <person name="Choisne N."/>
            <person name="Artiguenave F."/>
            <person name="Robert C."/>
            <person name="Brottier P."/>
            <person name="Wincker P."/>
            <person name="Cattolico L."/>
            <person name="Weissenbach J."/>
            <person name="Saurin W."/>
            <person name="Quetier F."/>
            <person name="Schaefer M."/>
            <person name="Mueller-Auer S."/>
            <person name="Gabel C."/>
            <person name="Fuchs M."/>
            <person name="Benes V."/>
            <person name="Wurmbach E."/>
            <person name="Drzonek H."/>
            <person name="Erfle H."/>
            <person name="Jordan N."/>
            <person name="Bangert S."/>
            <person name="Wiedelmann R."/>
            <person name="Kranz H."/>
            <person name="Voss H."/>
            <person name="Holland R."/>
            <person name="Brandt P."/>
            <person name="Nyakatura G."/>
            <person name="Vezzi A."/>
            <person name="D'Angelo M."/>
            <person name="Pallavicini A."/>
            <person name="Toppo S."/>
            <person name="Simionati B."/>
            <person name="Conrad A."/>
            <person name="Hornischer K."/>
            <person name="Kauer G."/>
            <person name="Loehnert T.-H."/>
            <person name="Nordsiek G."/>
            <person name="Reichelt J."/>
            <person name="Scharfe M."/>
            <person name="Schoen O."/>
            <person name="Bargues M."/>
            <person name="Terol J."/>
            <person name="Climent J."/>
            <person name="Navarro P."/>
            <person name="Collado C."/>
            <person name="Perez-Perez A."/>
            <person name="Ottenwaelder B."/>
            <person name="Duchemin D."/>
            <person name="Cooke R."/>
            <person name="Laudie M."/>
            <person name="Berger-Llauro C."/>
            <person name="Purnelle B."/>
            <person name="Masuy D."/>
            <person name="de Haan M."/>
            <person name="Maarse A.C."/>
            <person name="Alcaraz J.-P."/>
            <person name="Cottet A."/>
            <person name="Casacuberta E."/>
            <person name="Monfort A."/>
            <person name="Argiriou A."/>
            <person name="Flores M."/>
            <person name="Liguori R."/>
            <person name="Vitale D."/>
            <person name="Mannhaupt G."/>
            <person name="Haase D."/>
            <person name="Schoof H."/>
            <person name="Rudd S."/>
            <person name="Zaccaria P."/>
            <person name="Mewes H.-W."/>
            <person name="Mayer K.F.X."/>
            <person name="Kaul S."/>
            <person name="Town C.D."/>
            <person name="Koo H.L."/>
            <person name="Tallon L.J."/>
            <person name="Jenkins J."/>
            <person name="Rooney T."/>
            <person name="Rizzo M."/>
            <person name="Walts A."/>
            <person name="Utterback T."/>
            <person name="Fujii C.Y."/>
            <person name="Shea T.P."/>
            <person name="Creasy T.H."/>
            <person name="Haas B."/>
            <person name="Maiti R."/>
            <person name="Wu D."/>
            <person name="Peterson J."/>
            <person name="Van Aken S."/>
            <person name="Pai G."/>
            <person name="Militscher J."/>
            <person name="Sellers P."/>
            <person name="Gill J.E."/>
            <person name="Feldblyum T.V."/>
            <person name="Preuss D."/>
            <person name="Lin X."/>
            <person name="Nierman W.C."/>
            <person name="Salzberg S.L."/>
            <person name="White O."/>
            <person name="Venter J.C."/>
            <person name="Fraser C.M."/>
            <person name="Kaneko T."/>
            <person name="Nakamura Y."/>
            <person name="Sato S."/>
            <person name="Kato T."/>
            <person name="Asamizu E."/>
            <person name="Sasamoto S."/>
            <person name="Kimura T."/>
            <person name="Idesawa K."/>
            <person name="Kawashima K."/>
            <person name="Kishida Y."/>
            <person name="Kiyokawa C."/>
            <person name="Kohara M."/>
            <person name="Matsumoto M."/>
            <person name="Matsuno A."/>
            <person name="Muraki A."/>
            <person name="Nakayama S."/>
            <person name="Nakazaki N."/>
            <person name="Shinpo S."/>
            <person name="Takeuchi C."/>
            <person name="Wada T."/>
            <person name="Watanabe A."/>
            <person name="Yamada M."/>
            <person name="Yasuda M."/>
            <person name="Tabata S."/>
        </authorList>
    </citation>
    <scope>NUCLEOTIDE SEQUENCE [LARGE SCALE GENOMIC DNA]</scope>
    <source>
        <strain>cv. Columbia</strain>
    </source>
</reference>
<reference key="3">
    <citation type="journal article" date="2017" name="Plant J.">
        <title>Araport11: a complete reannotation of the Arabidopsis thaliana reference genome.</title>
        <authorList>
            <person name="Cheng C.Y."/>
            <person name="Krishnakumar V."/>
            <person name="Chan A.P."/>
            <person name="Thibaud-Nissen F."/>
            <person name="Schobel S."/>
            <person name="Town C.D."/>
        </authorList>
    </citation>
    <scope>GENOME REANNOTATION</scope>
    <source>
        <strain>cv. Columbia</strain>
    </source>
</reference>
<reference key="4">
    <citation type="journal article" date="2003" name="Science">
        <title>Empirical analysis of transcriptional activity in the Arabidopsis genome.</title>
        <authorList>
            <person name="Yamada K."/>
            <person name="Lim J."/>
            <person name="Dale J.M."/>
            <person name="Chen H."/>
            <person name="Shinn P."/>
            <person name="Palm C.J."/>
            <person name="Southwick A.M."/>
            <person name="Wu H.C."/>
            <person name="Kim C.J."/>
            <person name="Nguyen M."/>
            <person name="Pham P.K."/>
            <person name="Cheuk R.F."/>
            <person name="Karlin-Newmann G."/>
            <person name="Liu S.X."/>
            <person name="Lam B."/>
            <person name="Sakano H."/>
            <person name="Wu T."/>
            <person name="Yu G."/>
            <person name="Miranda M."/>
            <person name="Quach H.L."/>
            <person name="Tripp M."/>
            <person name="Chang C.H."/>
            <person name="Lee J.M."/>
            <person name="Toriumi M.J."/>
            <person name="Chan M.M."/>
            <person name="Tang C.C."/>
            <person name="Onodera C.S."/>
            <person name="Deng J.M."/>
            <person name="Akiyama K."/>
            <person name="Ansari Y."/>
            <person name="Arakawa T."/>
            <person name="Banh J."/>
            <person name="Banno F."/>
            <person name="Bowser L."/>
            <person name="Brooks S.Y."/>
            <person name="Carninci P."/>
            <person name="Chao Q."/>
            <person name="Choy N."/>
            <person name="Enju A."/>
            <person name="Goldsmith A.D."/>
            <person name="Gurjal M."/>
            <person name="Hansen N.F."/>
            <person name="Hayashizaki Y."/>
            <person name="Johnson-Hopson C."/>
            <person name="Hsuan V.W."/>
            <person name="Iida K."/>
            <person name="Karnes M."/>
            <person name="Khan S."/>
            <person name="Koesema E."/>
            <person name="Ishida J."/>
            <person name="Jiang P.X."/>
            <person name="Jones T."/>
            <person name="Kawai J."/>
            <person name="Kamiya A."/>
            <person name="Meyers C."/>
            <person name="Nakajima M."/>
            <person name="Narusaka M."/>
            <person name="Seki M."/>
            <person name="Sakurai T."/>
            <person name="Satou M."/>
            <person name="Tamse R."/>
            <person name="Vaysberg M."/>
            <person name="Wallender E.K."/>
            <person name="Wong C."/>
            <person name="Yamamura Y."/>
            <person name="Yuan S."/>
            <person name="Shinozaki K."/>
            <person name="Davis R.W."/>
            <person name="Theologis A."/>
            <person name="Ecker J.R."/>
        </authorList>
    </citation>
    <scope>NUCLEOTIDE SEQUENCE [LARGE SCALE MRNA] (ISOFORM 1)</scope>
    <source>
        <strain>cv. Columbia</strain>
    </source>
</reference>
<reference key="5">
    <citation type="journal article" date="2003" name="Mol. Cell. Proteomics">
        <title>Identification of three previously unknown in vivo protein phosphorylation sites in thylakoid membranes of Arabidopsis thaliana.</title>
        <authorList>
            <person name="Hansson M."/>
            <person name="Vener A.V."/>
        </authorList>
    </citation>
    <scope>PROTEIN SEQUENCE OF 32-38</scope>
    <scope>IDENTIFICATION BY MASS SPECTROMETRY</scope>
    <scope>ACETYLATION AT ARG-32</scope>
    <scope>PHOSPHORYLATION AT THR-37</scope>
    <source>
        <strain>cv. Wassilewskija</strain>
        <tissue>Leaf</tissue>
    </source>
</reference>
<reference key="6">
    <citation type="journal article" date="2009" name="J. Proteomics">
        <title>Phosphoproteomic analysis of nuclei-enriched fractions from Arabidopsis thaliana.</title>
        <authorList>
            <person name="Jones A.M.E."/>
            <person name="MacLean D."/>
            <person name="Studholme D.J."/>
            <person name="Serna-Sanz A."/>
            <person name="Andreasson E."/>
            <person name="Rathjen J.P."/>
            <person name="Peck S.C."/>
        </authorList>
    </citation>
    <scope>PHOSPHORYLATION [LARGE SCALE ANALYSIS] AT THR-37</scope>
    <scope>IDENTIFICATION BY MASS SPECTROMETRY [LARGE SCALE ANALYSIS]</scope>
    <source>
        <strain>cv. Columbia</strain>
    </source>
</reference>
<reference key="7">
    <citation type="journal article" date="2009" name="Plant Physiol.">
        <title>Large-scale Arabidopsis phosphoproteome profiling reveals novel chloroplast kinase substrates and phosphorylation networks.</title>
        <authorList>
            <person name="Reiland S."/>
            <person name="Messerli G."/>
            <person name="Baerenfaller K."/>
            <person name="Gerrits B."/>
            <person name="Endler A."/>
            <person name="Grossmann J."/>
            <person name="Gruissem W."/>
            <person name="Baginsky S."/>
        </authorList>
    </citation>
    <scope>PHOSPHORYLATION [LARGE SCALE ANALYSIS] AT THR-37; THR-109 AND THR-111</scope>
    <scope>IDENTIFICATION BY MASS SPECTROMETRY [LARGE SCALE ANALYSIS]</scope>
</reference>
<organism>
    <name type="scientific">Arabidopsis thaliana</name>
    <name type="common">Mouse-ear cress</name>
    <dbReference type="NCBI Taxonomy" id="3702"/>
    <lineage>
        <taxon>Eukaryota</taxon>
        <taxon>Viridiplantae</taxon>
        <taxon>Streptophyta</taxon>
        <taxon>Embryophyta</taxon>
        <taxon>Tracheophyta</taxon>
        <taxon>Spermatophyta</taxon>
        <taxon>Magnoliopsida</taxon>
        <taxon>eudicotyledons</taxon>
        <taxon>Gunneridae</taxon>
        <taxon>Pentapetalae</taxon>
        <taxon>rosids</taxon>
        <taxon>malvids</taxon>
        <taxon>Brassicales</taxon>
        <taxon>Brassicaceae</taxon>
        <taxon>Camelineae</taxon>
        <taxon>Arabidopsis</taxon>
    </lineage>
</organism>
<keyword id="KW-0007">Acetylation</keyword>
<keyword id="KW-0025">Alternative splicing</keyword>
<keyword id="KW-0148">Chlorophyll</keyword>
<keyword id="KW-0150">Chloroplast</keyword>
<keyword id="KW-0157">Chromophore</keyword>
<keyword id="KW-0903">Direct protein sequencing</keyword>
<keyword id="KW-0460">Magnesium</keyword>
<keyword id="KW-0472">Membrane</keyword>
<keyword id="KW-0479">Metal-binding</keyword>
<keyword id="KW-0597">Phosphoprotein</keyword>
<keyword id="KW-0602">Photosynthesis</keyword>
<keyword id="KW-0603">Photosystem I</keyword>
<keyword id="KW-0604">Photosystem II</keyword>
<keyword id="KW-0934">Plastid</keyword>
<keyword id="KW-1185">Reference proteome</keyword>
<keyword id="KW-0793">Thylakoid</keyword>
<keyword id="KW-0809">Transit peptide</keyword>
<keyword id="KW-0812">Transmembrane</keyword>
<keyword id="KW-1133">Transmembrane helix</keyword>
<protein>
    <recommendedName>
        <fullName>Chlorophyll a-b binding protein CP29.2, chloroplastic</fullName>
    </recommendedName>
    <alternativeName>
        <fullName>LHCB4.2</fullName>
    </alternativeName>
    <alternativeName>
        <fullName>LHCII protein 4.2</fullName>
    </alternativeName>
</protein>
<proteinExistence type="evidence at protein level"/>
<sequence length="287" mass="31194">MAATSTAAAASSIMGTRVVSDISSNSSRFTARFGFGTKKASPKKAKTVISDRPLWFPGAKSPEYLDGSLVGDYGFDPFGLGKPAEYLQFDLDSLDQNLAKNLYGEVIGTRTEAVDPKSTPFQPYSEVFGLQRFRECELIHGRWAMLATLGAITVEWLTGVTWQDAGKVELVDGSSYLGQPLPFSISTLIWIEVLVIGYIEFQRNAELDSEKRLYPGGKFFDPLGLASDPVKKAQLQLAEIKHARLAMVGFLGFAVQAAATGKGPLNNWATHLSDPLHTTIIDTFSSS</sequence>
<gene>
    <name type="primary">LHCB4.2</name>
    <name type="ordered locus">At3g08940</name>
    <name type="ORF">T16O11.12</name>
</gene>
<name>CB4B_ARATH</name>
<accession>Q9XF88</accession>
<evidence type="ECO:0000250" key="1"/>
<evidence type="ECO:0000255" key="2"/>
<evidence type="ECO:0000269" key="3">
    <source>
    </source>
</evidence>
<evidence type="ECO:0000305" key="4"/>
<evidence type="ECO:0007744" key="5">
    <source>
    </source>
</evidence>
<evidence type="ECO:0007744" key="6">
    <source>
    </source>
</evidence>
<comment type="function">
    <text>The light-harvesting complex (LHC) functions as a light receptor, it captures and delivers excitation energy to photosystems with which it is closely associated.</text>
</comment>
<comment type="cofactor">
    <text evidence="1">Binds at least 14 chlorophylls (8 Chl-a and 6 Chl-b) and carotenoids such as lutein and neoxanthin.</text>
</comment>
<comment type="subunit">
    <text>The LHC complex consists of chlorophyll a-b binding proteins.</text>
</comment>
<comment type="subcellular location">
    <subcellularLocation>
        <location>Plastid</location>
        <location>Chloroplast thylakoid membrane</location>
        <topology>Multi-pass membrane protein</topology>
    </subcellularLocation>
</comment>
<comment type="alternative products">
    <event type="alternative splicing"/>
    <isoform>
        <id>Q9XF88-1</id>
        <name>1</name>
        <sequence type="displayed"/>
    </isoform>
    <isoform>
        <id>Q9XF88-2</id>
        <name>2</name>
        <sequence type="described" ref="VSP_011361 VSP_011362"/>
    </isoform>
</comment>
<comment type="domain">
    <text>The N-terminus of the protein extends into the stroma where it is involved with adhesion of granal membranes and post-translational modifications; both are believed to mediate the distribution of excitation energy between photosystems I and II.</text>
</comment>
<comment type="PTM">
    <text evidence="1">Photoregulated by reversible phosphorylation of its threonine residues.</text>
</comment>
<comment type="miscellaneous">
    <text>This protein is phosphorylated under normal plant growth conditions, whereas phosphorylation of maize CP29 was induced only by high light in the cold.</text>
</comment>
<comment type="miscellaneous">
    <molecule>Isoform 2</molecule>
    <text evidence="4">May be due to an intron retention.</text>
</comment>
<comment type="similarity">
    <text evidence="4">Belongs to the light-harvesting chlorophyll a/b-binding (LHC) protein family.</text>
</comment>
<feature type="transit peptide" description="Chloroplast" evidence="3">
    <location>
        <begin position="1"/>
        <end position="31"/>
    </location>
</feature>
<feature type="chain" id="PRO_0000003652" description="Chlorophyll a-b binding protein CP29.2, chloroplastic">
    <location>
        <begin position="32"/>
        <end position="287"/>
    </location>
</feature>
<feature type="transmembrane region" description="Helical" evidence="2">
    <location>
        <begin position="143"/>
        <end position="163"/>
    </location>
</feature>
<feature type="transmembrane region" description="Helical" evidence="2">
    <location>
        <begin position="181"/>
        <end position="201"/>
    </location>
</feature>
<feature type="transmembrane region" description="Helical" evidence="2">
    <location>
        <begin position="245"/>
        <end position="265"/>
    </location>
</feature>
<feature type="binding site" description="axial binding residue" evidence="1">
    <location>
        <position position="55"/>
    </location>
    <ligand>
        <name>chlorophyll b</name>
        <dbReference type="ChEBI" id="CHEBI:61721"/>
        <label>1</label>
    </ligand>
    <ligandPart>
        <name>Mg</name>
        <dbReference type="ChEBI" id="CHEBI:25107"/>
    </ligandPart>
</feature>
<feature type="binding site" evidence="1">
    <location>
        <position position="75"/>
    </location>
    <ligand>
        <name>chlorophyll a</name>
        <dbReference type="ChEBI" id="CHEBI:58416"/>
        <label>1</label>
    </ligand>
</feature>
<feature type="binding site" description="axial binding residue" evidence="1">
    <location>
        <position position="137"/>
    </location>
    <ligand>
        <name>chlorophyll a</name>
        <dbReference type="ChEBI" id="CHEBI:58416"/>
        <label>1</label>
    </ligand>
    <ligandPart>
        <name>Mg</name>
        <dbReference type="ChEBI" id="CHEBI:25107"/>
    </ligandPart>
</feature>
<feature type="binding site" description="axial binding residue" evidence="1">
    <location>
        <position position="140"/>
    </location>
    <ligand>
        <name>chlorophyll a</name>
        <dbReference type="ChEBI" id="CHEBI:58416"/>
        <label>2</label>
    </ligand>
    <ligandPart>
        <name>Mg</name>
        <dbReference type="ChEBI" id="CHEBI:25107"/>
    </ligandPart>
</feature>
<feature type="binding site" evidence="1">
    <location>
        <position position="177"/>
    </location>
    <ligand>
        <name>chlorophyll a</name>
        <dbReference type="ChEBI" id="CHEBI:58416"/>
        <label>3</label>
    </ligand>
</feature>
<feature type="binding site" description="axial binding residue" evidence="1">
    <location>
        <position position="200"/>
    </location>
    <ligand>
        <name>chlorophyll b</name>
        <dbReference type="ChEBI" id="CHEBI:61721"/>
        <label>3</label>
    </ligand>
    <ligandPart>
        <name>Mg</name>
        <dbReference type="ChEBI" id="CHEBI:25107"/>
    </ligandPart>
</feature>
<feature type="binding site" evidence="1">
    <location>
        <position position="203"/>
    </location>
    <ligand>
        <name>chlorophyll b</name>
        <dbReference type="ChEBI" id="CHEBI:61721"/>
        <label>4</label>
    </ligand>
</feature>
<feature type="binding site" description="axial binding residue" evidence="1">
    <location>
        <position position="239"/>
    </location>
    <ligand>
        <name>chlorophyll a</name>
        <dbReference type="ChEBI" id="CHEBI:58416"/>
        <label>3</label>
    </ligand>
    <ligandPart>
        <name>Mg</name>
        <dbReference type="ChEBI" id="CHEBI:25107"/>
    </ligandPart>
</feature>
<feature type="binding site" description="axial binding residue" evidence="1">
    <location>
        <position position="242"/>
    </location>
    <ligand>
        <name>chlorophyll a</name>
        <dbReference type="ChEBI" id="CHEBI:58416"/>
        <label>4</label>
    </ligand>
    <ligandPart>
        <name>Mg</name>
        <dbReference type="ChEBI" id="CHEBI:25107"/>
    </ligandPart>
</feature>
<feature type="binding site" evidence="1">
    <location>
        <position position="244"/>
    </location>
    <ligand>
        <name>chlorophyll a</name>
        <dbReference type="ChEBI" id="CHEBI:58416"/>
        <label>1</label>
    </ligand>
</feature>
<feature type="binding site" description="axial binding residue" evidence="1">
    <location>
        <position position="256"/>
    </location>
    <ligand>
        <name>chlorophyll a</name>
        <dbReference type="ChEBI" id="CHEBI:58416"/>
        <label>5</label>
    </ligand>
    <ligandPart>
        <name>Mg</name>
        <dbReference type="ChEBI" id="CHEBI:25107"/>
    </ligandPart>
</feature>
<feature type="binding site" description="axial binding residue" evidence="1">
    <location>
        <position position="271"/>
    </location>
    <ligand>
        <name>chlorophyll a</name>
        <dbReference type="ChEBI" id="CHEBI:58416"/>
        <label>6</label>
    </ligand>
    <ligandPart>
        <name>Mg</name>
        <dbReference type="ChEBI" id="CHEBI:25107"/>
    </ligandPart>
</feature>
<feature type="modified residue" description="N2-acetylarginine" evidence="3">
    <location>
        <position position="32"/>
    </location>
</feature>
<feature type="modified residue" description="Phosphothreonine" evidence="3 5 6">
    <location>
        <position position="37"/>
    </location>
</feature>
<feature type="modified residue" description="Phosphothreonine" evidence="6">
    <location>
        <position position="109"/>
    </location>
</feature>
<feature type="modified residue" description="Phosphothreonine" evidence="6">
    <location>
        <position position="111"/>
    </location>
</feature>
<feature type="splice variant" id="VSP_011361" description="In isoform 2." evidence="4">
    <original>ELVDGSSYLGQPLPFSISTLIWIEVLVIGYIEFQRNAELDSEKRLYPGGKFFDPLGLAS</original>
    <variation>SPLFFSSLLRLCLAFRHLSDCFIFNLPGRASGWIILLRTAIAVLYLDIDMDRSVSDRLH</variation>
    <location>
        <begin position="169"/>
        <end position="227"/>
    </location>
</feature>
<feature type="splice variant" id="VSP_011362" description="In isoform 2." evidence="4">
    <location>
        <begin position="228"/>
        <end position="287"/>
    </location>
</feature>